<keyword id="KW-0028">Amino-acid biosynthesis</keyword>
<keyword id="KW-0100">Branched-chain amino acid biosynthesis</keyword>
<keyword id="KW-0963">Cytoplasm</keyword>
<keyword id="KW-0432">Leucine biosynthesis</keyword>
<keyword id="KW-0460">Magnesium</keyword>
<keyword id="KW-0464">Manganese</keyword>
<keyword id="KW-0479">Metal-binding</keyword>
<keyword id="KW-0520">NAD</keyword>
<keyword id="KW-0560">Oxidoreductase</keyword>
<keyword id="KW-1185">Reference proteome</keyword>
<evidence type="ECO:0000255" key="1">
    <source>
        <dbReference type="HAMAP-Rule" id="MF_01033"/>
    </source>
</evidence>
<gene>
    <name evidence="1" type="primary">leuB</name>
    <name type="ordered locus">DSY1371</name>
</gene>
<name>LEU3_DESHY</name>
<protein>
    <recommendedName>
        <fullName evidence="1">3-isopropylmalate dehydrogenase</fullName>
        <ecNumber evidence="1">1.1.1.85</ecNumber>
    </recommendedName>
    <alternativeName>
        <fullName evidence="1">3-IPM-DH</fullName>
    </alternativeName>
    <alternativeName>
        <fullName evidence="1">Beta-IPM dehydrogenase</fullName>
        <shortName evidence="1">IMDH</shortName>
    </alternativeName>
</protein>
<accession>Q24XT2</accession>
<reference key="1">
    <citation type="journal article" date="2006" name="J. Bacteriol.">
        <title>Complete genome sequence of the dehalorespiring bacterium Desulfitobacterium hafniense Y51 and comparison with Dehalococcoides ethenogenes 195.</title>
        <authorList>
            <person name="Nonaka H."/>
            <person name="Keresztes G."/>
            <person name="Shinoda Y."/>
            <person name="Ikenaga Y."/>
            <person name="Abe M."/>
            <person name="Naito K."/>
            <person name="Inatomi K."/>
            <person name="Furukawa K."/>
            <person name="Inui M."/>
            <person name="Yukawa H."/>
        </authorList>
    </citation>
    <scope>NUCLEOTIDE SEQUENCE [LARGE SCALE GENOMIC DNA]</scope>
    <source>
        <strain>Y51</strain>
    </source>
</reference>
<organism>
    <name type="scientific">Desulfitobacterium hafniense (strain Y51)</name>
    <dbReference type="NCBI Taxonomy" id="138119"/>
    <lineage>
        <taxon>Bacteria</taxon>
        <taxon>Bacillati</taxon>
        <taxon>Bacillota</taxon>
        <taxon>Clostridia</taxon>
        <taxon>Eubacteriales</taxon>
        <taxon>Desulfitobacteriaceae</taxon>
        <taxon>Desulfitobacterium</taxon>
    </lineage>
</organism>
<proteinExistence type="inferred from homology"/>
<sequence>MPKIAVLPGDGIGQEIIPQAVRVLKAVLAETDAEFEFQDYPIGGAAIELVGKALPDETLQGCREADAVLLGAVGGHQWDHLPASERPETAALLGLRKGLNFYANIRPVRMIPSLLATSTLKENVLDGVDMVVIRELTGGVYFGEKGRSDNPRSAYDKMTYSEEEIRRILIQGFETAMLRSKKLCSVDKANVLETSRLWREIANELAKEYPEVELTHMYVDNAAMQLVRNPKQFDVIVTENMFGDILTDLASMLGGSIGMLSSASLSGTQGMYEPAHGSAPDIAGKNLANPLATILSAALMLRYSFGMEAEALRIESAVEKVLEQGYRTGDLAQAGDKVVGTIEMGDAVLAAL</sequence>
<comment type="function">
    <text evidence="1">Catalyzes the oxidation of 3-carboxy-2-hydroxy-4-methylpentanoate (3-isopropylmalate) to 3-carboxy-4-methyl-2-oxopentanoate. The product decarboxylates to 4-methyl-2 oxopentanoate.</text>
</comment>
<comment type="catalytic activity">
    <reaction evidence="1">
        <text>(2R,3S)-3-isopropylmalate + NAD(+) = 4-methyl-2-oxopentanoate + CO2 + NADH</text>
        <dbReference type="Rhea" id="RHEA:32271"/>
        <dbReference type="ChEBI" id="CHEBI:16526"/>
        <dbReference type="ChEBI" id="CHEBI:17865"/>
        <dbReference type="ChEBI" id="CHEBI:35121"/>
        <dbReference type="ChEBI" id="CHEBI:57540"/>
        <dbReference type="ChEBI" id="CHEBI:57945"/>
        <dbReference type="EC" id="1.1.1.85"/>
    </reaction>
</comment>
<comment type="cofactor">
    <cofactor evidence="1">
        <name>Mg(2+)</name>
        <dbReference type="ChEBI" id="CHEBI:18420"/>
    </cofactor>
    <cofactor evidence="1">
        <name>Mn(2+)</name>
        <dbReference type="ChEBI" id="CHEBI:29035"/>
    </cofactor>
    <text evidence="1">Binds 1 Mg(2+) or Mn(2+) ion per subunit.</text>
</comment>
<comment type="pathway">
    <text evidence="1">Amino-acid biosynthesis; L-leucine biosynthesis; L-leucine from 3-methyl-2-oxobutanoate: step 3/4.</text>
</comment>
<comment type="subunit">
    <text evidence="1">Homodimer.</text>
</comment>
<comment type="subcellular location">
    <subcellularLocation>
        <location evidence="1">Cytoplasm</location>
    </subcellularLocation>
</comment>
<comment type="similarity">
    <text evidence="1">Belongs to the isocitrate and isopropylmalate dehydrogenases family. LeuB type 1 subfamily.</text>
</comment>
<dbReference type="EC" id="1.1.1.85" evidence="1"/>
<dbReference type="EMBL" id="AP008230">
    <property type="protein sequence ID" value="BAE83160.1"/>
    <property type="molecule type" value="Genomic_DNA"/>
</dbReference>
<dbReference type="RefSeq" id="WP_005816724.1">
    <property type="nucleotide sequence ID" value="NC_007907.1"/>
</dbReference>
<dbReference type="SMR" id="Q24XT2"/>
<dbReference type="STRING" id="138119.DSY1371"/>
<dbReference type="KEGG" id="dsy:DSY1371"/>
<dbReference type="eggNOG" id="COG0473">
    <property type="taxonomic scope" value="Bacteria"/>
</dbReference>
<dbReference type="HOGENOM" id="CLU_031953_0_3_9"/>
<dbReference type="UniPathway" id="UPA00048">
    <property type="reaction ID" value="UER00072"/>
</dbReference>
<dbReference type="Proteomes" id="UP000001946">
    <property type="component" value="Chromosome"/>
</dbReference>
<dbReference type="GO" id="GO:0005829">
    <property type="term" value="C:cytosol"/>
    <property type="evidence" value="ECO:0007669"/>
    <property type="project" value="TreeGrafter"/>
</dbReference>
<dbReference type="GO" id="GO:0003862">
    <property type="term" value="F:3-isopropylmalate dehydrogenase activity"/>
    <property type="evidence" value="ECO:0007669"/>
    <property type="project" value="UniProtKB-UniRule"/>
</dbReference>
<dbReference type="GO" id="GO:0000287">
    <property type="term" value="F:magnesium ion binding"/>
    <property type="evidence" value="ECO:0007669"/>
    <property type="project" value="InterPro"/>
</dbReference>
<dbReference type="GO" id="GO:0051287">
    <property type="term" value="F:NAD binding"/>
    <property type="evidence" value="ECO:0007669"/>
    <property type="project" value="InterPro"/>
</dbReference>
<dbReference type="GO" id="GO:0009098">
    <property type="term" value="P:L-leucine biosynthetic process"/>
    <property type="evidence" value="ECO:0007669"/>
    <property type="project" value="UniProtKB-UniRule"/>
</dbReference>
<dbReference type="FunFam" id="3.40.718.10:FF:000028">
    <property type="entry name" value="3-isopropylmalate dehydrogenase"/>
    <property type="match status" value="1"/>
</dbReference>
<dbReference type="Gene3D" id="3.40.718.10">
    <property type="entry name" value="Isopropylmalate Dehydrogenase"/>
    <property type="match status" value="1"/>
</dbReference>
<dbReference type="HAMAP" id="MF_01033">
    <property type="entry name" value="LeuB_type1"/>
    <property type="match status" value="1"/>
</dbReference>
<dbReference type="InterPro" id="IPR019818">
    <property type="entry name" value="IsoCit/isopropylmalate_DH_CS"/>
</dbReference>
<dbReference type="InterPro" id="IPR024084">
    <property type="entry name" value="IsoPropMal-DH-like_dom"/>
</dbReference>
<dbReference type="InterPro" id="IPR004429">
    <property type="entry name" value="Isopropylmalate_DH"/>
</dbReference>
<dbReference type="NCBIfam" id="TIGR00169">
    <property type="entry name" value="leuB"/>
    <property type="match status" value="1"/>
</dbReference>
<dbReference type="PANTHER" id="PTHR42979">
    <property type="entry name" value="3-ISOPROPYLMALATE DEHYDROGENASE"/>
    <property type="match status" value="1"/>
</dbReference>
<dbReference type="PANTHER" id="PTHR42979:SF1">
    <property type="entry name" value="3-ISOPROPYLMALATE DEHYDROGENASE"/>
    <property type="match status" value="1"/>
</dbReference>
<dbReference type="Pfam" id="PF00180">
    <property type="entry name" value="Iso_dh"/>
    <property type="match status" value="1"/>
</dbReference>
<dbReference type="SMART" id="SM01329">
    <property type="entry name" value="Iso_dh"/>
    <property type="match status" value="1"/>
</dbReference>
<dbReference type="SUPFAM" id="SSF53659">
    <property type="entry name" value="Isocitrate/Isopropylmalate dehydrogenase-like"/>
    <property type="match status" value="1"/>
</dbReference>
<dbReference type="PROSITE" id="PS00470">
    <property type="entry name" value="IDH_IMDH"/>
    <property type="match status" value="1"/>
</dbReference>
<feature type="chain" id="PRO_0000250114" description="3-isopropylmalate dehydrogenase">
    <location>
        <begin position="1"/>
        <end position="352"/>
    </location>
</feature>
<feature type="binding site" evidence="1">
    <location>
        <position position="96"/>
    </location>
    <ligand>
        <name>substrate</name>
    </ligand>
</feature>
<feature type="binding site" evidence="1">
    <location>
        <position position="106"/>
    </location>
    <ligand>
        <name>substrate</name>
    </ligand>
</feature>
<feature type="binding site" evidence="1">
    <location>
        <position position="134"/>
    </location>
    <ligand>
        <name>substrate</name>
    </ligand>
</feature>
<feature type="binding site" evidence="1">
    <location>
        <position position="220"/>
    </location>
    <ligand>
        <name>Mg(2+)</name>
        <dbReference type="ChEBI" id="CHEBI:18420"/>
    </ligand>
</feature>
<feature type="binding site" evidence="1">
    <location>
        <position position="220"/>
    </location>
    <ligand>
        <name>substrate</name>
    </ligand>
</feature>
<feature type="binding site" evidence="1">
    <location>
        <position position="244"/>
    </location>
    <ligand>
        <name>Mg(2+)</name>
        <dbReference type="ChEBI" id="CHEBI:18420"/>
    </ligand>
</feature>
<feature type="binding site" evidence="1">
    <location>
        <position position="248"/>
    </location>
    <ligand>
        <name>Mg(2+)</name>
        <dbReference type="ChEBI" id="CHEBI:18420"/>
    </ligand>
</feature>
<feature type="binding site" evidence="1">
    <location>
        <begin position="277"/>
        <end position="289"/>
    </location>
    <ligand>
        <name>NAD(+)</name>
        <dbReference type="ChEBI" id="CHEBI:57540"/>
    </ligand>
</feature>
<feature type="site" description="Important for catalysis" evidence="1">
    <location>
        <position position="141"/>
    </location>
</feature>
<feature type="site" description="Important for catalysis" evidence="1">
    <location>
        <position position="188"/>
    </location>
</feature>